<name>SPLE_STAA8</name>
<protein>
    <recommendedName>
        <fullName>Serine protease SplE</fullName>
        <ecNumber>3.4.21.-</ecNumber>
    </recommendedName>
</protein>
<reference key="1">
    <citation type="journal article" date="2001" name="Infect. Immun.">
        <title>Molecular characterization of a novel Staphylococcus aureus serine protease operon.</title>
        <authorList>
            <person name="Reed S.B."/>
            <person name="Wesson C.A."/>
            <person name="Liou L.E."/>
            <person name="Trumble W.R."/>
            <person name="Schlievert P.M."/>
            <person name="Bohach G.A."/>
            <person name="Bayles K.W."/>
        </authorList>
    </citation>
    <scope>NUCLEOTIDE SEQUENCE [GENOMIC DNA]</scope>
    <scope>DEVELOPMENTAL STAGE</scope>
    <scope>INDUCTION</scope>
</reference>
<reference key="2">
    <citation type="book" date="2006" name="Gram positive pathogens, 2nd edition">
        <title>The Staphylococcus aureus NCTC 8325 genome.</title>
        <editorList>
            <person name="Fischetti V."/>
            <person name="Novick R."/>
            <person name="Ferretti J."/>
            <person name="Portnoy D."/>
            <person name="Rood J."/>
        </editorList>
        <authorList>
            <person name="Gillaspy A.F."/>
            <person name="Worrell V."/>
            <person name="Orvis J."/>
            <person name="Roe B.A."/>
            <person name="Dyer D.W."/>
            <person name="Iandolo J.J."/>
        </authorList>
    </citation>
    <scope>NUCLEOTIDE SEQUENCE [LARGE SCALE GENOMIC DNA]</scope>
    <source>
        <strain>NCTC 8325 / PS 47</strain>
    </source>
</reference>
<evidence type="ECO:0000250" key="1"/>
<evidence type="ECO:0000255" key="2"/>
<evidence type="ECO:0000269" key="3">
    <source>
    </source>
</evidence>
<evidence type="ECO:0000305" key="4"/>
<evidence type="ECO:0007829" key="5">
    <source>
        <dbReference type="PDB" id="5MM8"/>
    </source>
</evidence>
<accession>Q2FXC7</accession>
<accession>Q9KH47</accession>
<keyword id="KW-0002">3D-structure</keyword>
<keyword id="KW-0378">Hydrolase</keyword>
<keyword id="KW-0645">Protease</keyword>
<keyword id="KW-1185">Reference proteome</keyword>
<keyword id="KW-0964">Secreted</keyword>
<keyword id="KW-0720">Serine protease</keyword>
<keyword id="KW-0732">Signal</keyword>
<sequence>MNKNIIIKSIAALTILTSVTGVGTTVVEGIQQTAKAEHNVKLIKNTNVAPYNGVVSIGSGTGFIVGKNTIVTNKHVVAGMEIGAHIIAHPNGEYNNGGFYKVKKIVRYSGQEDIAILHVEDKAVHPKNRNFKDYTGILKIASEAKENERISIVGYPEPYINKFQMYESTGKVLSVKGNMIITDAFVEPGNSGSAVFNSKYEVVGVHFGGNGPGNKSTKGYGVYFSPEIKKFIADNTDK</sequence>
<dbReference type="EC" id="3.4.21.-"/>
<dbReference type="EMBL" id="AF271715">
    <property type="protein sequence ID" value="AAF97929.1"/>
    <property type="molecule type" value="Genomic_DNA"/>
</dbReference>
<dbReference type="EMBL" id="CP000253">
    <property type="protein sequence ID" value="ABD30999.1"/>
    <property type="molecule type" value="Genomic_DNA"/>
</dbReference>
<dbReference type="RefSeq" id="WP_001038759.1">
    <property type="nucleotide sequence ID" value="NZ_LS483365.1"/>
</dbReference>
<dbReference type="RefSeq" id="YP_500437.1">
    <property type="nucleotide sequence ID" value="NC_007795.1"/>
</dbReference>
<dbReference type="PDB" id="5MM8">
    <property type="method" value="X-ray"/>
    <property type="resolution" value="1.75 A"/>
    <property type="chains" value="A=37-238"/>
</dbReference>
<dbReference type="PDBsum" id="5MM8"/>
<dbReference type="SMR" id="Q2FXC7"/>
<dbReference type="STRING" id="93061.SAOUHSC_01936"/>
<dbReference type="MEROPS" id="S01.312"/>
<dbReference type="PaxDb" id="1280-SAXN108_1842"/>
<dbReference type="GeneID" id="3921020"/>
<dbReference type="KEGG" id="sao:SAOUHSC_01936"/>
<dbReference type="PATRIC" id="fig|93061.5.peg.1763"/>
<dbReference type="eggNOG" id="COG3591">
    <property type="taxonomic scope" value="Bacteria"/>
</dbReference>
<dbReference type="HOGENOM" id="CLU_073589_2_0_9"/>
<dbReference type="OrthoDB" id="2396730at2"/>
<dbReference type="PHI-base" id="PHI:11225"/>
<dbReference type="PRO" id="PR:Q2FXC7"/>
<dbReference type="Proteomes" id="UP000008816">
    <property type="component" value="Chromosome"/>
</dbReference>
<dbReference type="GO" id="GO:0005576">
    <property type="term" value="C:extracellular region"/>
    <property type="evidence" value="ECO:0007669"/>
    <property type="project" value="UniProtKB-SubCell"/>
</dbReference>
<dbReference type="GO" id="GO:0004252">
    <property type="term" value="F:serine-type endopeptidase activity"/>
    <property type="evidence" value="ECO:0007669"/>
    <property type="project" value="InterPro"/>
</dbReference>
<dbReference type="GO" id="GO:0006508">
    <property type="term" value="P:proteolysis"/>
    <property type="evidence" value="ECO:0007669"/>
    <property type="project" value="UniProtKB-KW"/>
</dbReference>
<dbReference type="Gene3D" id="2.40.10.10">
    <property type="entry name" value="Trypsin-like serine proteases"/>
    <property type="match status" value="2"/>
</dbReference>
<dbReference type="InterPro" id="IPR009003">
    <property type="entry name" value="Peptidase_S1_PA"/>
</dbReference>
<dbReference type="InterPro" id="IPR043504">
    <property type="entry name" value="Peptidase_S1_PA_chymotrypsin"/>
</dbReference>
<dbReference type="InterPro" id="IPR008256">
    <property type="entry name" value="Peptidase_S1B"/>
</dbReference>
<dbReference type="InterPro" id="IPR008353">
    <property type="entry name" value="Peptidase_S1B_tx"/>
</dbReference>
<dbReference type="InterPro" id="IPR001254">
    <property type="entry name" value="Trypsin_dom"/>
</dbReference>
<dbReference type="InterPro" id="IPR028301">
    <property type="entry name" value="V8_his_AS"/>
</dbReference>
<dbReference type="PANTHER" id="PTHR43019:SF23">
    <property type="entry name" value="PROTEASE DO-LIKE 5, CHLOROPLASTIC"/>
    <property type="match status" value="1"/>
</dbReference>
<dbReference type="PANTHER" id="PTHR43019">
    <property type="entry name" value="SERINE ENDOPROTEASE DEGS"/>
    <property type="match status" value="1"/>
</dbReference>
<dbReference type="Pfam" id="PF00089">
    <property type="entry name" value="Trypsin"/>
    <property type="match status" value="1"/>
</dbReference>
<dbReference type="PRINTS" id="PR01774">
    <property type="entry name" value="EXFOLTOXIN"/>
</dbReference>
<dbReference type="PRINTS" id="PR00839">
    <property type="entry name" value="V8PROTEASE"/>
</dbReference>
<dbReference type="SUPFAM" id="SSF50494">
    <property type="entry name" value="Trypsin-like serine proteases"/>
    <property type="match status" value="1"/>
</dbReference>
<dbReference type="PROSITE" id="PS00672">
    <property type="entry name" value="V8_HIS"/>
    <property type="match status" value="1"/>
</dbReference>
<feature type="signal peptide" evidence="2">
    <location>
        <begin position="1"/>
        <end position="36"/>
    </location>
</feature>
<feature type="chain" id="PRO_0000359575" description="Serine protease SplE">
    <location>
        <begin position="37"/>
        <end position="238"/>
    </location>
</feature>
<feature type="active site" description="Charge relay system" evidence="1">
    <location>
        <position position="75"/>
    </location>
</feature>
<feature type="active site" description="Charge relay system" evidence="1">
    <location>
        <position position="113"/>
    </location>
</feature>
<feature type="active site" description="Charge relay system" evidence="1">
    <location>
        <position position="191"/>
    </location>
</feature>
<feature type="strand" evidence="5">
    <location>
        <begin position="39"/>
        <end position="42"/>
    </location>
</feature>
<feature type="helix" evidence="5">
    <location>
        <begin position="51"/>
        <end position="53"/>
    </location>
</feature>
<feature type="strand" evidence="5">
    <location>
        <begin position="54"/>
        <end position="57"/>
    </location>
</feature>
<feature type="strand" evidence="5">
    <location>
        <begin position="60"/>
        <end position="66"/>
    </location>
</feature>
<feature type="strand" evidence="5">
    <location>
        <begin position="69"/>
        <end position="72"/>
    </location>
</feature>
<feature type="turn" evidence="5">
    <location>
        <begin position="74"/>
        <end position="79"/>
    </location>
</feature>
<feature type="strand" evidence="5">
    <location>
        <begin position="85"/>
        <end position="89"/>
    </location>
</feature>
<feature type="strand" evidence="5">
    <location>
        <begin position="91"/>
        <end position="94"/>
    </location>
</feature>
<feature type="strand" evidence="5">
    <location>
        <begin position="99"/>
        <end position="107"/>
    </location>
</feature>
<feature type="strand" evidence="5">
    <location>
        <begin position="109"/>
        <end position="113"/>
    </location>
</feature>
<feature type="strand" evidence="5">
    <location>
        <begin position="115"/>
        <end position="119"/>
    </location>
</feature>
<feature type="strand" evidence="5">
    <location>
        <begin position="124"/>
        <end position="126"/>
    </location>
</feature>
<feature type="helix" evidence="5">
    <location>
        <begin position="131"/>
        <end position="134"/>
    </location>
</feature>
<feature type="strand" evidence="5">
    <location>
        <begin position="149"/>
        <end position="154"/>
    </location>
</feature>
<feature type="turn" evidence="5">
    <location>
        <begin position="158"/>
        <end position="162"/>
    </location>
</feature>
<feature type="strand" evidence="5">
    <location>
        <begin position="166"/>
        <end position="176"/>
    </location>
</feature>
<feature type="strand" evidence="5">
    <location>
        <begin position="179"/>
        <end position="182"/>
    </location>
</feature>
<feature type="strand" evidence="5">
    <location>
        <begin position="194"/>
        <end position="196"/>
    </location>
</feature>
<feature type="strand" evidence="5">
    <location>
        <begin position="202"/>
        <end position="208"/>
    </location>
</feature>
<feature type="strand" evidence="5">
    <location>
        <begin position="219"/>
        <end position="223"/>
    </location>
</feature>
<feature type="helix" evidence="5">
    <location>
        <begin position="226"/>
        <end position="234"/>
    </location>
</feature>
<comment type="subcellular location">
    <subcellularLocation>
        <location evidence="1">Secreted</location>
    </subcellularLocation>
</comment>
<comment type="developmental stage">
    <text evidence="3">Maximally expressed during early stationary phase.</text>
</comment>
<comment type="induction">
    <text evidence="3">Positively regulated by agr (accessory gene regulator).</text>
</comment>
<comment type="similarity">
    <text evidence="4">Belongs to the peptidase S1B family.</text>
</comment>
<organism>
    <name type="scientific">Staphylococcus aureus (strain NCTC 8325 / PS 47)</name>
    <dbReference type="NCBI Taxonomy" id="93061"/>
    <lineage>
        <taxon>Bacteria</taxon>
        <taxon>Bacillati</taxon>
        <taxon>Bacillota</taxon>
        <taxon>Bacilli</taxon>
        <taxon>Bacillales</taxon>
        <taxon>Staphylococcaceae</taxon>
        <taxon>Staphylococcus</taxon>
    </lineage>
</organism>
<proteinExistence type="evidence at protein level"/>
<gene>
    <name type="primary">splE</name>
    <name type="ordered locus">SAOUHSC_01936</name>
</gene>